<sequence length="260" mass="29658">MELQLTGKESGWWIVSHENKLWLPKGELPQGNAANWSLQGATARQIGEWQGQPVWLIRQMMPSGMGSVRQLLDVDRGLFQLAGRGVQLAEFYRSHRFCGYCGHEMHASRTEWASLCNHCRERYYPQIAPCVIVAIRRGDEILLAQHVRHRGGINTVLAGFVEVGETLEQAVSREVLEESNIHIKNLRYVTSQPWPFPHSLMMAFMADYDSGELCHDPKELLNAGWYRYDQLPLLPPPGTVARRLIEDTVVLCREHSDLSQ</sequence>
<dbReference type="EC" id="3.6.1.-" evidence="1"/>
<dbReference type="EC" id="3.6.1.22" evidence="1"/>
<dbReference type="EMBL" id="CP001048">
    <property type="protein sequence ID" value="ACC87304.1"/>
    <property type="molecule type" value="Genomic_DNA"/>
</dbReference>
<dbReference type="RefSeq" id="WP_011191554.1">
    <property type="nucleotide sequence ID" value="NZ_CP009780.1"/>
</dbReference>
<dbReference type="SMR" id="B2K122"/>
<dbReference type="GeneID" id="49787716"/>
<dbReference type="KEGG" id="ypb:YPTS_0313"/>
<dbReference type="PATRIC" id="fig|502801.10.peg.3989"/>
<dbReference type="GO" id="GO:0005829">
    <property type="term" value="C:cytosol"/>
    <property type="evidence" value="ECO:0007669"/>
    <property type="project" value="TreeGrafter"/>
</dbReference>
<dbReference type="GO" id="GO:0000287">
    <property type="term" value="F:magnesium ion binding"/>
    <property type="evidence" value="ECO:0007669"/>
    <property type="project" value="UniProtKB-UniRule"/>
</dbReference>
<dbReference type="GO" id="GO:0030145">
    <property type="term" value="F:manganese ion binding"/>
    <property type="evidence" value="ECO:0007669"/>
    <property type="project" value="UniProtKB-UniRule"/>
</dbReference>
<dbReference type="GO" id="GO:0000210">
    <property type="term" value="F:NAD+ diphosphatase activity"/>
    <property type="evidence" value="ECO:0007669"/>
    <property type="project" value="UniProtKB-UniRule"/>
</dbReference>
<dbReference type="GO" id="GO:0035529">
    <property type="term" value="F:NADH pyrophosphatase activity"/>
    <property type="evidence" value="ECO:0007669"/>
    <property type="project" value="TreeGrafter"/>
</dbReference>
<dbReference type="GO" id="GO:0110153">
    <property type="term" value="F:RNA NAD-cap (NMN-forming) hydrolase activity"/>
    <property type="evidence" value="ECO:0007669"/>
    <property type="project" value="RHEA"/>
</dbReference>
<dbReference type="GO" id="GO:0008270">
    <property type="term" value="F:zinc ion binding"/>
    <property type="evidence" value="ECO:0007669"/>
    <property type="project" value="UniProtKB-UniRule"/>
</dbReference>
<dbReference type="GO" id="GO:0019677">
    <property type="term" value="P:NAD catabolic process"/>
    <property type="evidence" value="ECO:0007669"/>
    <property type="project" value="TreeGrafter"/>
</dbReference>
<dbReference type="GO" id="GO:0006734">
    <property type="term" value="P:NADH metabolic process"/>
    <property type="evidence" value="ECO:0007669"/>
    <property type="project" value="TreeGrafter"/>
</dbReference>
<dbReference type="GO" id="GO:0006742">
    <property type="term" value="P:NADP catabolic process"/>
    <property type="evidence" value="ECO:0007669"/>
    <property type="project" value="TreeGrafter"/>
</dbReference>
<dbReference type="CDD" id="cd03429">
    <property type="entry name" value="NUDIX_NADH_pyrophosphatase_Nudt13"/>
    <property type="match status" value="1"/>
</dbReference>
<dbReference type="FunFam" id="3.90.79.10:FF:000004">
    <property type="entry name" value="NADH pyrophosphatase"/>
    <property type="match status" value="1"/>
</dbReference>
<dbReference type="FunFam" id="3.90.79.20:FF:000001">
    <property type="entry name" value="NADH pyrophosphatase"/>
    <property type="match status" value="1"/>
</dbReference>
<dbReference type="Gene3D" id="3.90.79.20">
    <property type="match status" value="1"/>
</dbReference>
<dbReference type="Gene3D" id="3.90.79.10">
    <property type="entry name" value="Nucleoside Triphosphate Pyrophosphohydrolase"/>
    <property type="match status" value="1"/>
</dbReference>
<dbReference type="HAMAP" id="MF_00297">
    <property type="entry name" value="Nudix_NudC"/>
    <property type="match status" value="1"/>
</dbReference>
<dbReference type="InterPro" id="IPR050241">
    <property type="entry name" value="NAD-cap_RNA_hydrolase_NudC"/>
</dbReference>
<dbReference type="InterPro" id="IPR049734">
    <property type="entry name" value="NudC-like_C"/>
</dbReference>
<dbReference type="InterPro" id="IPR015797">
    <property type="entry name" value="NUDIX_hydrolase-like_dom_sf"/>
</dbReference>
<dbReference type="InterPro" id="IPR020084">
    <property type="entry name" value="NUDIX_hydrolase_CS"/>
</dbReference>
<dbReference type="InterPro" id="IPR000086">
    <property type="entry name" value="NUDIX_hydrolase_dom"/>
</dbReference>
<dbReference type="InterPro" id="IPR022925">
    <property type="entry name" value="RNA_Hydrolase_NudC"/>
</dbReference>
<dbReference type="InterPro" id="IPR015376">
    <property type="entry name" value="Znr_NADH_PPase"/>
</dbReference>
<dbReference type="NCBIfam" id="NF001299">
    <property type="entry name" value="PRK00241.1"/>
    <property type="match status" value="1"/>
</dbReference>
<dbReference type="PANTHER" id="PTHR42904:SF6">
    <property type="entry name" value="NAD-CAPPED RNA HYDROLASE NUDT12"/>
    <property type="match status" value="1"/>
</dbReference>
<dbReference type="PANTHER" id="PTHR42904">
    <property type="entry name" value="NUDIX HYDROLASE, NUDC SUBFAMILY"/>
    <property type="match status" value="1"/>
</dbReference>
<dbReference type="Pfam" id="PF00293">
    <property type="entry name" value="NUDIX"/>
    <property type="match status" value="1"/>
</dbReference>
<dbReference type="Pfam" id="PF09297">
    <property type="entry name" value="Zn_ribbon_NUD"/>
    <property type="match status" value="1"/>
</dbReference>
<dbReference type="SUPFAM" id="SSF55811">
    <property type="entry name" value="Nudix"/>
    <property type="match status" value="2"/>
</dbReference>
<dbReference type="PROSITE" id="PS51462">
    <property type="entry name" value="NUDIX"/>
    <property type="match status" value="1"/>
</dbReference>
<dbReference type="PROSITE" id="PS00893">
    <property type="entry name" value="NUDIX_BOX"/>
    <property type="match status" value="1"/>
</dbReference>
<name>NUDC_YERPB</name>
<proteinExistence type="inferred from homology"/>
<protein>
    <recommendedName>
        <fullName evidence="1">NAD-capped RNA hydrolase NudC</fullName>
        <shortName evidence="1">DeNADding enzyme NudC</shortName>
        <ecNumber evidence="1">3.6.1.-</ecNumber>
    </recommendedName>
    <alternativeName>
        <fullName evidence="1">NADH pyrophosphatase</fullName>
        <ecNumber evidence="1">3.6.1.22</ecNumber>
    </alternativeName>
</protein>
<accession>B2K122</accession>
<feature type="chain" id="PRO_1000115255" description="NAD-capped RNA hydrolase NudC">
    <location>
        <begin position="1"/>
        <end position="260"/>
    </location>
</feature>
<feature type="domain" description="Nudix hydrolase" evidence="1">
    <location>
        <begin position="125"/>
        <end position="248"/>
    </location>
</feature>
<feature type="short sequence motif" description="Nudix box" evidence="1">
    <location>
        <begin position="159"/>
        <end position="180"/>
    </location>
</feature>
<feature type="binding site" evidence="1">
    <location>
        <position position="25"/>
    </location>
    <ligand>
        <name>substrate</name>
    </ligand>
</feature>
<feature type="binding site" evidence="1">
    <location>
        <position position="69"/>
    </location>
    <ligand>
        <name>substrate</name>
    </ligand>
</feature>
<feature type="binding site" evidence="1">
    <location>
        <position position="98"/>
    </location>
    <ligand>
        <name>Zn(2+)</name>
        <dbReference type="ChEBI" id="CHEBI:29105"/>
    </ligand>
</feature>
<feature type="binding site" evidence="1">
    <location>
        <position position="101"/>
    </location>
    <ligand>
        <name>Zn(2+)</name>
        <dbReference type="ChEBI" id="CHEBI:29105"/>
    </ligand>
</feature>
<feature type="binding site" evidence="1">
    <location>
        <position position="111"/>
    </location>
    <ligand>
        <name>substrate</name>
    </ligand>
</feature>
<feature type="binding site" evidence="1">
    <location>
        <position position="116"/>
    </location>
    <ligand>
        <name>Zn(2+)</name>
        <dbReference type="ChEBI" id="CHEBI:29105"/>
    </ligand>
</feature>
<feature type="binding site" evidence="1">
    <location>
        <position position="119"/>
    </location>
    <ligand>
        <name>Zn(2+)</name>
        <dbReference type="ChEBI" id="CHEBI:29105"/>
    </ligand>
</feature>
<feature type="binding site" evidence="1">
    <location>
        <position position="124"/>
    </location>
    <ligand>
        <name>substrate</name>
    </ligand>
</feature>
<feature type="binding site" evidence="1">
    <location>
        <position position="158"/>
    </location>
    <ligand>
        <name>a divalent metal cation</name>
        <dbReference type="ChEBI" id="CHEBI:60240"/>
        <label>1</label>
    </ligand>
</feature>
<feature type="binding site" evidence="1">
    <location>
        <position position="174"/>
    </location>
    <ligand>
        <name>a divalent metal cation</name>
        <dbReference type="ChEBI" id="CHEBI:60240"/>
        <label>2</label>
    </ligand>
</feature>
<feature type="binding site" evidence="1">
    <location>
        <position position="174"/>
    </location>
    <ligand>
        <name>a divalent metal cation</name>
        <dbReference type="ChEBI" id="CHEBI:60240"/>
        <label>3</label>
    </ligand>
</feature>
<feature type="binding site" evidence="1">
    <location>
        <position position="178"/>
    </location>
    <ligand>
        <name>a divalent metal cation</name>
        <dbReference type="ChEBI" id="CHEBI:60240"/>
        <label>1</label>
    </ligand>
</feature>
<feature type="binding site" evidence="1">
    <location>
        <position position="178"/>
    </location>
    <ligand>
        <name>a divalent metal cation</name>
        <dbReference type="ChEBI" id="CHEBI:60240"/>
        <label>3</label>
    </ligand>
</feature>
<feature type="binding site" evidence="1">
    <location>
        <begin position="192"/>
        <end position="199"/>
    </location>
    <ligand>
        <name>substrate</name>
    </ligand>
</feature>
<feature type="binding site" evidence="1">
    <location>
        <position position="219"/>
    </location>
    <ligand>
        <name>a divalent metal cation</name>
        <dbReference type="ChEBI" id="CHEBI:60240"/>
        <label>1</label>
    </ligand>
</feature>
<feature type="binding site" evidence="1">
    <location>
        <position position="219"/>
    </location>
    <ligand>
        <name>a divalent metal cation</name>
        <dbReference type="ChEBI" id="CHEBI:60240"/>
        <label>3</label>
    </ligand>
</feature>
<feature type="binding site" evidence="1">
    <location>
        <position position="241"/>
    </location>
    <ligand>
        <name>substrate</name>
    </ligand>
</feature>
<comment type="function">
    <text evidence="1">mRNA decapping enzyme that specifically removes the nicotinamide adenine dinucleotide (NAD) cap from a subset of mRNAs by hydrolyzing the diphosphate linkage to produce nicotinamide mononucleotide (NMN) and 5' monophosphate mRNA. The NAD-cap is present at the 5'-end of some mRNAs and stabilizes RNA against 5'-processing. Has preference for mRNAs with a 5'-end purine. Catalyzes the hydrolysis of a broad range of dinucleotide pyrophosphates.</text>
</comment>
<comment type="catalytic activity">
    <reaction evidence="1">
        <text>a 5'-end NAD(+)-phospho-ribonucleoside in mRNA + H2O = a 5'-end phospho-adenosine-phospho-ribonucleoside in mRNA + beta-nicotinamide D-ribonucleotide + 2 H(+)</text>
        <dbReference type="Rhea" id="RHEA:60876"/>
        <dbReference type="Rhea" id="RHEA-COMP:15698"/>
        <dbReference type="Rhea" id="RHEA-COMP:15719"/>
        <dbReference type="ChEBI" id="CHEBI:14649"/>
        <dbReference type="ChEBI" id="CHEBI:15377"/>
        <dbReference type="ChEBI" id="CHEBI:15378"/>
        <dbReference type="ChEBI" id="CHEBI:144029"/>
        <dbReference type="ChEBI" id="CHEBI:144051"/>
    </reaction>
    <physiologicalReaction direction="left-to-right" evidence="1">
        <dbReference type="Rhea" id="RHEA:60877"/>
    </physiologicalReaction>
</comment>
<comment type="catalytic activity">
    <reaction evidence="1">
        <text>NAD(+) + H2O = beta-nicotinamide D-ribonucleotide + AMP + 2 H(+)</text>
        <dbReference type="Rhea" id="RHEA:11800"/>
        <dbReference type="ChEBI" id="CHEBI:14649"/>
        <dbReference type="ChEBI" id="CHEBI:15377"/>
        <dbReference type="ChEBI" id="CHEBI:15378"/>
        <dbReference type="ChEBI" id="CHEBI:57540"/>
        <dbReference type="ChEBI" id="CHEBI:456215"/>
        <dbReference type="EC" id="3.6.1.22"/>
    </reaction>
</comment>
<comment type="catalytic activity">
    <reaction evidence="1">
        <text>NADH + H2O = reduced beta-nicotinamide D-ribonucleotide + AMP + 2 H(+)</text>
        <dbReference type="Rhea" id="RHEA:48868"/>
        <dbReference type="ChEBI" id="CHEBI:15377"/>
        <dbReference type="ChEBI" id="CHEBI:15378"/>
        <dbReference type="ChEBI" id="CHEBI:57945"/>
        <dbReference type="ChEBI" id="CHEBI:90832"/>
        <dbReference type="ChEBI" id="CHEBI:456215"/>
        <dbReference type="EC" id="3.6.1.22"/>
    </reaction>
</comment>
<comment type="cofactor">
    <cofactor evidence="1">
        <name>Mg(2+)</name>
        <dbReference type="ChEBI" id="CHEBI:18420"/>
    </cofactor>
    <cofactor evidence="1">
        <name>Mn(2+)</name>
        <dbReference type="ChEBI" id="CHEBI:29035"/>
    </cofactor>
    <text evidence="1">Divalent metal cations. Mg(2+) or Mn(2+).</text>
</comment>
<comment type="cofactor">
    <cofactor evidence="1">
        <name>Zn(2+)</name>
        <dbReference type="ChEBI" id="CHEBI:29105"/>
    </cofactor>
    <text evidence="1">Binds 1 zinc ion per subunit.</text>
</comment>
<comment type="subunit">
    <text evidence="1">Homodimer.</text>
</comment>
<comment type="similarity">
    <text evidence="1">Belongs to the Nudix hydrolase family. NudC subfamily.</text>
</comment>
<keyword id="KW-0378">Hydrolase</keyword>
<keyword id="KW-0460">Magnesium</keyword>
<keyword id="KW-0464">Manganese</keyword>
<keyword id="KW-0479">Metal-binding</keyword>
<keyword id="KW-0520">NAD</keyword>
<keyword id="KW-0862">Zinc</keyword>
<gene>
    <name evidence="1" type="primary">nudC</name>
    <name type="ordered locus">YPTS_0313</name>
</gene>
<evidence type="ECO:0000255" key="1">
    <source>
        <dbReference type="HAMAP-Rule" id="MF_00297"/>
    </source>
</evidence>
<reference key="1">
    <citation type="submission" date="2008-04" db="EMBL/GenBank/DDBJ databases">
        <title>Complete sequence of Yersinia pseudotuberculosis PB1/+.</title>
        <authorList>
            <person name="Copeland A."/>
            <person name="Lucas S."/>
            <person name="Lapidus A."/>
            <person name="Glavina del Rio T."/>
            <person name="Dalin E."/>
            <person name="Tice H."/>
            <person name="Bruce D."/>
            <person name="Goodwin L."/>
            <person name="Pitluck S."/>
            <person name="Munk A.C."/>
            <person name="Brettin T."/>
            <person name="Detter J.C."/>
            <person name="Han C."/>
            <person name="Tapia R."/>
            <person name="Schmutz J."/>
            <person name="Larimer F."/>
            <person name="Land M."/>
            <person name="Hauser L."/>
            <person name="Challacombe J.F."/>
            <person name="Green L."/>
            <person name="Lindler L.E."/>
            <person name="Nikolich M.P."/>
            <person name="Richardson P."/>
        </authorList>
    </citation>
    <scope>NUCLEOTIDE SEQUENCE [LARGE SCALE GENOMIC DNA]</scope>
    <source>
        <strain>PB1/+</strain>
    </source>
</reference>
<organism>
    <name type="scientific">Yersinia pseudotuberculosis serotype IB (strain PB1/+)</name>
    <dbReference type="NCBI Taxonomy" id="502801"/>
    <lineage>
        <taxon>Bacteria</taxon>
        <taxon>Pseudomonadati</taxon>
        <taxon>Pseudomonadota</taxon>
        <taxon>Gammaproteobacteria</taxon>
        <taxon>Enterobacterales</taxon>
        <taxon>Yersiniaceae</taxon>
        <taxon>Yersinia</taxon>
    </lineage>
</organism>